<sequence length="243" mass="25317">MMIKQSPFLLLTTILFTVAVFVAALDPAPEDPIFELYMHDLLGGSSPTARPITGLLGNIYNGQVPFAKQIGFTPPENGIAIPNANGALPTVNGINGVPLGTGLSGTAYSGQNLNGIQTQLGPDGLSLGFGTITVIDDILTSGPDLGSQPLGKAQGVYVASSADGSTQMMAFTAMLEGGEYNDNLNFYGIYRIGSAMSHLSVTGGTGRFKNACGFAEVRPLIPSGQHEVDGAESLLRIIVHLKY</sequence>
<reference key="1">
    <citation type="journal article" date="2000" name="DNA Res.">
        <title>Structural analysis of Arabidopsis thaliana chromosome 3. II. Sequence features of the 4,251,695 bp regions covered by 90 P1, TAC and BAC clones.</title>
        <authorList>
            <person name="Kaneko T."/>
            <person name="Katoh T."/>
            <person name="Sato S."/>
            <person name="Nakamura Y."/>
            <person name="Asamizu E."/>
            <person name="Tabata S."/>
        </authorList>
    </citation>
    <scope>NUCLEOTIDE SEQUENCE [LARGE SCALE GENOMIC DNA]</scope>
    <source>
        <strain>cv. Columbia</strain>
    </source>
</reference>
<reference key="2">
    <citation type="journal article" date="2017" name="Plant J.">
        <title>Araport11: a complete reannotation of the Arabidopsis thaliana reference genome.</title>
        <authorList>
            <person name="Cheng C.Y."/>
            <person name="Krishnakumar V."/>
            <person name="Chan A.P."/>
            <person name="Thibaud-Nissen F."/>
            <person name="Schobel S."/>
            <person name="Town C.D."/>
        </authorList>
    </citation>
    <scope>GENOME REANNOTATION</scope>
    <source>
        <strain>cv. Columbia</strain>
    </source>
</reference>
<reference key="3">
    <citation type="journal article" date="2003" name="Science">
        <title>Empirical analysis of transcriptional activity in the Arabidopsis genome.</title>
        <authorList>
            <person name="Yamada K."/>
            <person name="Lim J."/>
            <person name="Dale J.M."/>
            <person name="Chen H."/>
            <person name="Shinn P."/>
            <person name="Palm C.J."/>
            <person name="Southwick A.M."/>
            <person name="Wu H.C."/>
            <person name="Kim C.J."/>
            <person name="Nguyen M."/>
            <person name="Pham P.K."/>
            <person name="Cheuk R.F."/>
            <person name="Karlin-Newmann G."/>
            <person name="Liu S.X."/>
            <person name="Lam B."/>
            <person name="Sakano H."/>
            <person name="Wu T."/>
            <person name="Yu G."/>
            <person name="Miranda M."/>
            <person name="Quach H.L."/>
            <person name="Tripp M."/>
            <person name="Chang C.H."/>
            <person name="Lee J.M."/>
            <person name="Toriumi M.J."/>
            <person name="Chan M.M."/>
            <person name="Tang C.C."/>
            <person name="Onodera C.S."/>
            <person name="Deng J.M."/>
            <person name="Akiyama K."/>
            <person name="Ansari Y."/>
            <person name="Arakawa T."/>
            <person name="Banh J."/>
            <person name="Banno F."/>
            <person name="Bowser L."/>
            <person name="Brooks S.Y."/>
            <person name="Carninci P."/>
            <person name="Chao Q."/>
            <person name="Choy N."/>
            <person name="Enju A."/>
            <person name="Goldsmith A.D."/>
            <person name="Gurjal M."/>
            <person name="Hansen N.F."/>
            <person name="Hayashizaki Y."/>
            <person name="Johnson-Hopson C."/>
            <person name="Hsuan V.W."/>
            <person name="Iida K."/>
            <person name="Karnes M."/>
            <person name="Khan S."/>
            <person name="Koesema E."/>
            <person name="Ishida J."/>
            <person name="Jiang P.X."/>
            <person name="Jones T."/>
            <person name="Kawai J."/>
            <person name="Kamiya A."/>
            <person name="Meyers C."/>
            <person name="Nakajima M."/>
            <person name="Narusaka M."/>
            <person name="Seki M."/>
            <person name="Sakurai T."/>
            <person name="Satou M."/>
            <person name="Tamse R."/>
            <person name="Vaysberg M."/>
            <person name="Wallender E.K."/>
            <person name="Wong C."/>
            <person name="Yamamura Y."/>
            <person name="Yuan S."/>
            <person name="Shinozaki K."/>
            <person name="Davis R.W."/>
            <person name="Theologis A."/>
            <person name="Ecker J.R."/>
        </authorList>
    </citation>
    <scope>NUCLEOTIDE SEQUENCE [LARGE SCALE MRNA]</scope>
    <source>
        <strain>cv. Columbia</strain>
    </source>
</reference>
<reference key="4">
    <citation type="submission" date="2006-07" db="EMBL/GenBank/DDBJ databases">
        <title>Large-scale analysis of RIKEN Arabidopsis full-length (RAFL) cDNAs.</title>
        <authorList>
            <person name="Totoki Y."/>
            <person name="Seki M."/>
            <person name="Ishida J."/>
            <person name="Nakajima M."/>
            <person name="Enju A."/>
            <person name="Kamiya A."/>
            <person name="Narusaka M."/>
            <person name="Shin-i T."/>
            <person name="Nakagawa M."/>
            <person name="Sakamoto N."/>
            <person name="Oishi K."/>
            <person name="Kohara Y."/>
            <person name="Kobayashi M."/>
            <person name="Toyoda A."/>
            <person name="Sakaki Y."/>
            <person name="Sakurai T."/>
            <person name="Iida K."/>
            <person name="Akiyama K."/>
            <person name="Satou M."/>
            <person name="Toyoda T."/>
            <person name="Konagaya A."/>
            <person name="Carninci P."/>
            <person name="Kawai J."/>
            <person name="Hayashizaki Y."/>
            <person name="Shinozaki K."/>
        </authorList>
    </citation>
    <scope>NUCLEOTIDE SEQUENCE [LARGE SCALE MRNA]</scope>
    <source>
        <strain>cv. Columbia</strain>
    </source>
</reference>
<reference key="5">
    <citation type="journal article" date="2007" name="Phytochemistry">
        <title>Dirigent proteins in conifer defense II: Extended gene discovery, phylogeny, and constitutive and stress-induced gene expression in spruce (Picea spp.).</title>
        <authorList>
            <person name="Ralph S.G."/>
            <person name="Jancsik S."/>
            <person name="Bohlmann J."/>
        </authorList>
    </citation>
    <scope>GENE FAMILY</scope>
    <scope>NOMENCLATURE</scope>
</reference>
<comment type="function">
    <text evidence="1">Dirigent proteins impart stereoselectivity on the phenoxy radical-coupling reaction, yielding optically active lignans from two molecules of coniferyl alcohol in the biosynthesis of lignans, flavonolignans, and alkaloids and thus plays a central role in plant secondary metabolism.</text>
</comment>
<comment type="subunit">
    <text evidence="1">Homodimer.</text>
</comment>
<comment type="subcellular location">
    <subcellularLocation>
        <location evidence="1">Secreted</location>
        <location evidence="1">Extracellular space</location>
        <location evidence="1">Apoplast</location>
    </subcellularLocation>
</comment>
<comment type="similarity">
    <text evidence="3">Belongs to the plant dirigent protein family.</text>
</comment>
<comment type="sequence caution" evidence="3">
    <conflict type="erroneous gene model prediction">
        <sequence resource="EMBL-CDS" id="BAB03020"/>
    </conflict>
</comment>
<keyword id="KW-0052">Apoplast</keyword>
<keyword id="KW-1185">Reference proteome</keyword>
<keyword id="KW-0964">Secreted</keyword>
<keyword id="KW-0732">Signal</keyword>
<gene>
    <name type="primary">DIR16</name>
    <name type="ordered locus">At3g24020</name>
    <name type="ORF">F14O13.21</name>
</gene>
<evidence type="ECO:0000250" key="1"/>
<evidence type="ECO:0000255" key="2"/>
<evidence type="ECO:0000305" key="3"/>
<feature type="signal peptide" evidence="2">
    <location>
        <begin position="1"/>
        <end position="24"/>
    </location>
</feature>
<feature type="chain" id="PRO_0000422847" description="Dirigent protein 16">
    <location>
        <begin position="25"/>
        <end position="243"/>
    </location>
</feature>
<dbReference type="EMBL" id="AP001297">
    <property type="protein sequence ID" value="BAB03020.1"/>
    <property type="status" value="ALT_SEQ"/>
    <property type="molecule type" value="Genomic_DNA"/>
</dbReference>
<dbReference type="EMBL" id="CP002686">
    <property type="protein sequence ID" value="AEE76845.1"/>
    <property type="molecule type" value="Genomic_DNA"/>
</dbReference>
<dbReference type="EMBL" id="BT008336">
    <property type="protein sequence ID" value="AAP37695.1"/>
    <property type="molecule type" value="mRNA"/>
</dbReference>
<dbReference type="EMBL" id="AK228024">
    <property type="protein sequence ID" value="BAE99986.1"/>
    <property type="molecule type" value="mRNA"/>
</dbReference>
<dbReference type="RefSeq" id="NP_189044.1">
    <property type="nucleotide sequence ID" value="NM_113307.2"/>
</dbReference>
<dbReference type="SMR" id="Q7Y225"/>
<dbReference type="FunCoup" id="Q7Y225">
    <property type="interactions" value="26"/>
</dbReference>
<dbReference type="STRING" id="3702.Q7Y225"/>
<dbReference type="PaxDb" id="3702-AT3G24020.1"/>
<dbReference type="ProteomicsDB" id="222146"/>
<dbReference type="EnsemblPlants" id="AT3G24020.1">
    <property type="protein sequence ID" value="AT3G24020.1"/>
    <property type="gene ID" value="AT3G24020"/>
</dbReference>
<dbReference type="GeneID" id="821987"/>
<dbReference type="Gramene" id="AT3G24020.1">
    <property type="protein sequence ID" value="AT3G24020.1"/>
    <property type="gene ID" value="AT3G24020"/>
</dbReference>
<dbReference type="KEGG" id="ath:AT3G24020"/>
<dbReference type="Araport" id="AT3G24020"/>
<dbReference type="TAIR" id="AT3G24020"/>
<dbReference type="eggNOG" id="ENOG502QT90">
    <property type="taxonomic scope" value="Eukaryota"/>
</dbReference>
<dbReference type="HOGENOM" id="CLU_059816_1_0_1"/>
<dbReference type="InParanoid" id="Q7Y225"/>
<dbReference type="OMA" id="PVFELYM"/>
<dbReference type="OrthoDB" id="1921494at2759"/>
<dbReference type="PhylomeDB" id="Q7Y225"/>
<dbReference type="PRO" id="PR:Q7Y225"/>
<dbReference type="Proteomes" id="UP000006548">
    <property type="component" value="Chromosome 3"/>
</dbReference>
<dbReference type="ExpressionAtlas" id="Q7Y225">
    <property type="expression patterns" value="baseline and differential"/>
</dbReference>
<dbReference type="GO" id="GO:0048046">
    <property type="term" value="C:apoplast"/>
    <property type="evidence" value="ECO:0007669"/>
    <property type="project" value="UniProtKB-SubCell"/>
</dbReference>
<dbReference type="GO" id="GO:0009699">
    <property type="term" value="P:phenylpropanoid biosynthetic process"/>
    <property type="evidence" value="ECO:0007669"/>
    <property type="project" value="UniProtKB-ARBA"/>
</dbReference>
<dbReference type="Gene3D" id="2.40.480.10">
    <property type="entry name" value="Allene oxide cyclase-like"/>
    <property type="match status" value="1"/>
</dbReference>
<dbReference type="InterPro" id="IPR044859">
    <property type="entry name" value="Allene_oxi_cyc_Dirigent"/>
</dbReference>
<dbReference type="InterPro" id="IPR004265">
    <property type="entry name" value="Dirigent"/>
</dbReference>
<dbReference type="PANTHER" id="PTHR46215:SF27">
    <property type="entry name" value="DIRIGENT PROTEIN 16"/>
    <property type="match status" value="1"/>
</dbReference>
<dbReference type="PANTHER" id="PTHR46215">
    <property type="entry name" value="DIRIGENT PROTEIN 24-RELATED"/>
    <property type="match status" value="1"/>
</dbReference>
<dbReference type="Pfam" id="PF03018">
    <property type="entry name" value="Dirigent"/>
    <property type="match status" value="1"/>
</dbReference>
<proteinExistence type="evidence at transcript level"/>
<protein>
    <recommendedName>
        <fullName>Dirigent protein 16</fullName>
        <shortName>AtDIR16</shortName>
    </recommendedName>
</protein>
<organism>
    <name type="scientific">Arabidopsis thaliana</name>
    <name type="common">Mouse-ear cress</name>
    <dbReference type="NCBI Taxonomy" id="3702"/>
    <lineage>
        <taxon>Eukaryota</taxon>
        <taxon>Viridiplantae</taxon>
        <taxon>Streptophyta</taxon>
        <taxon>Embryophyta</taxon>
        <taxon>Tracheophyta</taxon>
        <taxon>Spermatophyta</taxon>
        <taxon>Magnoliopsida</taxon>
        <taxon>eudicotyledons</taxon>
        <taxon>Gunneridae</taxon>
        <taxon>Pentapetalae</taxon>
        <taxon>rosids</taxon>
        <taxon>malvids</taxon>
        <taxon>Brassicales</taxon>
        <taxon>Brassicaceae</taxon>
        <taxon>Camelineae</taxon>
        <taxon>Arabidopsis</taxon>
    </lineage>
</organism>
<name>DIR16_ARATH</name>
<accession>Q7Y225</accession>
<accession>Q9LIQ5</accession>